<proteinExistence type="inferred from homology"/>
<reference key="1">
    <citation type="journal article" date="2001" name="Nature">
        <title>Complete genome sequence of a multiple drug resistant Salmonella enterica serovar Typhi CT18.</title>
        <authorList>
            <person name="Parkhill J."/>
            <person name="Dougan G."/>
            <person name="James K.D."/>
            <person name="Thomson N.R."/>
            <person name="Pickard D."/>
            <person name="Wain J."/>
            <person name="Churcher C.M."/>
            <person name="Mungall K.L."/>
            <person name="Bentley S.D."/>
            <person name="Holden M.T.G."/>
            <person name="Sebaihia M."/>
            <person name="Baker S."/>
            <person name="Basham D."/>
            <person name="Brooks K."/>
            <person name="Chillingworth T."/>
            <person name="Connerton P."/>
            <person name="Cronin A."/>
            <person name="Davis P."/>
            <person name="Davies R.M."/>
            <person name="Dowd L."/>
            <person name="White N."/>
            <person name="Farrar J."/>
            <person name="Feltwell T."/>
            <person name="Hamlin N."/>
            <person name="Haque A."/>
            <person name="Hien T.T."/>
            <person name="Holroyd S."/>
            <person name="Jagels K."/>
            <person name="Krogh A."/>
            <person name="Larsen T.S."/>
            <person name="Leather S."/>
            <person name="Moule S."/>
            <person name="O'Gaora P."/>
            <person name="Parry C."/>
            <person name="Quail M.A."/>
            <person name="Rutherford K.M."/>
            <person name="Simmonds M."/>
            <person name="Skelton J."/>
            <person name="Stevens K."/>
            <person name="Whitehead S."/>
            <person name="Barrell B.G."/>
        </authorList>
    </citation>
    <scope>NUCLEOTIDE SEQUENCE [LARGE SCALE GENOMIC DNA]</scope>
    <source>
        <strain>CT18</strain>
    </source>
</reference>
<reference key="2">
    <citation type="journal article" date="2003" name="J. Bacteriol.">
        <title>Comparative genomics of Salmonella enterica serovar Typhi strains Ty2 and CT18.</title>
        <authorList>
            <person name="Deng W."/>
            <person name="Liou S.-R."/>
            <person name="Plunkett G. III"/>
            <person name="Mayhew G.F."/>
            <person name="Rose D.J."/>
            <person name="Burland V."/>
            <person name="Kodoyianni V."/>
            <person name="Schwartz D.C."/>
            <person name="Blattner F.R."/>
        </authorList>
    </citation>
    <scope>NUCLEOTIDE SEQUENCE [LARGE SCALE GENOMIC DNA]</scope>
    <source>
        <strain>ATCC 700931 / Ty2</strain>
    </source>
</reference>
<name>HEMN_SALTI</name>
<feature type="chain" id="PRO_0000109951" description="Oxygen-independent coproporphyrinogen III oxidase">
    <location>
        <begin position="1"/>
        <end position="457"/>
    </location>
</feature>
<feature type="domain" description="Radical SAM core" evidence="2">
    <location>
        <begin position="47"/>
        <end position="280"/>
    </location>
</feature>
<feature type="binding site" evidence="1">
    <location>
        <position position="56"/>
    </location>
    <ligand>
        <name>S-adenosyl-L-methionine</name>
        <dbReference type="ChEBI" id="CHEBI:59789"/>
        <label>1</label>
    </ligand>
</feature>
<feature type="binding site" evidence="1">
    <location>
        <position position="62"/>
    </location>
    <ligand>
        <name>[4Fe-4S] cluster</name>
        <dbReference type="ChEBI" id="CHEBI:49883"/>
        <note>4Fe-4S-S-AdoMet</note>
    </ligand>
</feature>
<feature type="binding site" evidence="1">
    <location>
        <position position="66"/>
    </location>
    <ligand>
        <name>[4Fe-4S] cluster</name>
        <dbReference type="ChEBI" id="CHEBI:49883"/>
        <note>4Fe-4S-S-AdoMet</note>
    </ligand>
</feature>
<feature type="binding site" evidence="1">
    <location>
        <position position="68"/>
    </location>
    <ligand>
        <name>S-adenosyl-L-methionine</name>
        <dbReference type="ChEBI" id="CHEBI:59789"/>
        <label>2</label>
    </ligand>
</feature>
<feature type="binding site" evidence="1">
    <location>
        <position position="69"/>
    </location>
    <ligand>
        <name>[4Fe-4S] cluster</name>
        <dbReference type="ChEBI" id="CHEBI:49883"/>
        <note>4Fe-4S-S-AdoMet</note>
    </ligand>
</feature>
<feature type="binding site" evidence="1">
    <location>
        <position position="112"/>
    </location>
    <ligand>
        <name>S-adenosyl-L-methionine</name>
        <dbReference type="ChEBI" id="CHEBI:59789"/>
        <label>1</label>
    </ligand>
</feature>
<feature type="binding site" evidence="1">
    <location>
        <begin position="113"/>
        <end position="114"/>
    </location>
    <ligand>
        <name>S-adenosyl-L-methionine</name>
        <dbReference type="ChEBI" id="CHEBI:59789"/>
        <label>2</label>
    </ligand>
</feature>
<feature type="binding site" evidence="1">
    <location>
        <position position="145"/>
    </location>
    <ligand>
        <name>S-adenosyl-L-methionine</name>
        <dbReference type="ChEBI" id="CHEBI:59789"/>
        <label>1</label>
    </ligand>
</feature>
<feature type="binding site" evidence="1">
    <location>
        <position position="172"/>
    </location>
    <ligand>
        <name>S-adenosyl-L-methionine</name>
        <dbReference type="ChEBI" id="CHEBI:59789"/>
        <label>2</label>
    </ligand>
</feature>
<feature type="binding site" evidence="1">
    <location>
        <position position="184"/>
    </location>
    <ligand>
        <name>S-adenosyl-L-methionine</name>
        <dbReference type="ChEBI" id="CHEBI:59789"/>
        <label>2</label>
    </ligand>
</feature>
<feature type="binding site" evidence="1">
    <location>
        <position position="209"/>
    </location>
    <ligand>
        <name>S-adenosyl-L-methionine</name>
        <dbReference type="ChEBI" id="CHEBI:59789"/>
        <label>2</label>
    </ligand>
</feature>
<feature type="binding site" evidence="1">
    <location>
        <position position="243"/>
    </location>
    <ligand>
        <name>S-adenosyl-L-methionine</name>
        <dbReference type="ChEBI" id="CHEBI:59789"/>
        <label>2</label>
    </ligand>
</feature>
<feature type="binding site" evidence="1">
    <location>
        <position position="329"/>
    </location>
    <ligand>
        <name>S-adenosyl-L-methionine</name>
        <dbReference type="ChEBI" id="CHEBI:59789"/>
        <label>1</label>
    </ligand>
</feature>
<dbReference type="EC" id="1.3.98.3" evidence="1"/>
<dbReference type="EMBL" id="AL513382">
    <property type="protein sequence ID" value="CAD03096.1"/>
    <property type="molecule type" value="Genomic_DNA"/>
</dbReference>
<dbReference type="EMBL" id="AE014613">
    <property type="protein sequence ID" value="AAO71118.1"/>
    <property type="molecule type" value="Genomic_DNA"/>
</dbReference>
<dbReference type="RefSeq" id="NP_458045.1">
    <property type="nucleotide sequence ID" value="NC_003198.1"/>
</dbReference>
<dbReference type="RefSeq" id="WP_000003520.1">
    <property type="nucleotide sequence ID" value="NZ_WSUR01000010.1"/>
</dbReference>
<dbReference type="SMR" id="P0A1E2"/>
<dbReference type="STRING" id="220341.gene:17587733"/>
<dbReference type="KEGG" id="stt:t3617"/>
<dbReference type="KEGG" id="sty:STY3877"/>
<dbReference type="PATRIC" id="fig|220341.7.peg.3955"/>
<dbReference type="eggNOG" id="COG0635">
    <property type="taxonomic scope" value="Bacteria"/>
</dbReference>
<dbReference type="HOGENOM" id="CLU_027579_3_0_6"/>
<dbReference type="OMA" id="NYAHVPW"/>
<dbReference type="OrthoDB" id="9808022at2"/>
<dbReference type="UniPathway" id="UPA00251">
    <property type="reaction ID" value="UER00323"/>
</dbReference>
<dbReference type="Proteomes" id="UP000000541">
    <property type="component" value="Chromosome"/>
</dbReference>
<dbReference type="Proteomes" id="UP000002670">
    <property type="component" value="Chromosome"/>
</dbReference>
<dbReference type="GO" id="GO:0005737">
    <property type="term" value="C:cytoplasm"/>
    <property type="evidence" value="ECO:0000250"/>
    <property type="project" value="UniProtKB"/>
</dbReference>
<dbReference type="GO" id="GO:0051539">
    <property type="term" value="F:4 iron, 4 sulfur cluster binding"/>
    <property type="evidence" value="ECO:0000250"/>
    <property type="project" value="UniProtKB"/>
</dbReference>
<dbReference type="GO" id="GO:0051989">
    <property type="term" value="F:coproporphyrinogen dehydrogenase activity"/>
    <property type="evidence" value="ECO:0000250"/>
    <property type="project" value="UniProtKB"/>
</dbReference>
<dbReference type="GO" id="GO:0004109">
    <property type="term" value="F:coproporphyrinogen oxidase activity"/>
    <property type="evidence" value="ECO:0007669"/>
    <property type="project" value="InterPro"/>
</dbReference>
<dbReference type="GO" id="GO:0046872">
    <property type="term" value="F:metal ion binding"/>
    <property type="evidence" value="ECO:0007669"/>
    <property type="project" value="UniProtKB-KW"/>
</dbReference>
<dbReference type="GO" id="GO:0006779">
    <property type="term" value="P:porphyrin-containing compound biosynthetic process"/>
    <property type="evidence" value="ECO:0000250"/>
    <property type="project" value="UniProtKB"/>
</dbReference>
<dbReference type="GO" id="GO:0006782">
    <property type="term" value="P:protoporphyrinogen IX biosynthetic process"/>
    <property type="evidence" value="ECO:0000250"/>
    <property type="project" value="UniProtKB"/>
</dbReference>
<dbReference type="CDD" id="cd01335">
    <property type="entry name" value="Radical_SAM"/>
    <property type="match status" value="1"/>
</dbReference>
<dbReference type="FunFam" id="1.10.10.920:FF:000001">
    <property type="entry name" value="Coproporphyrinogen-III oxidase"/>
    <property type="match status" value="1"/>
</dbReference>
<dbReference type="FunFam" id="3.20.20.70:FF:000077">
    <property type="entry name" value="Coproporphyrinogen-III oxidase"/>
    <property type="match status" value="1"/>
</dbReference>
<dbReference type="FunFam" id="3.80.30.20:FF:000012">
    <property type="entry name" value="Coproporphyrinogen-III oxidase"/>
    <property type="match status" value="1"/>
</dbReference>
<dbReference type="Gene3D" id="1.10.10.920">
    <property type="match status" value="1"/>
</dbReference>
<dbReference type="Gene3D" id="3.20.20.70">
    <property type="entry name" value="Aldolase class I"/>
    <property type="match status" value="1"/>
</dbReference>
<dbReference type="InterPro" id="IPR013785">
    <property type="entry name" value="Aldolase_TIM"/>
</dbReference>
<dbReference type="InterPro" id="IPR004558">
    <property type="entry name" value="Coprogen_oxidase_HemN"/>
</dbReference>
<dbReference type="InterPro" id="IPR034505">
    <property type="entry name" value="Coproporphyrinogen-III_oxidase"/>
</dbReference>
<dbReference type="InterPro" id="IPR006638">
    <property type="entry name" value="Elp3/MiaA/NifB-like_rSAM"/>
</dbReference>
<dbReference type="InterPro" id="IPR010723">
    <property type="entry name" value="HemN_C"/>
</dbReference>
<dbReference type="InterPro" id="IPR007197">
    <property type="entry name" value="rSAM"/>
</dbReference>
<dbReference type="NCBIfam" id="TIGR00538">
    <property type="entry name" value="hemN"/>
    <property type="match status" value="1"/>
</dbReference>
<dbReference type="PANTHER" id="PTHR13932">
    <property type="entry name" value="COPROPORPHYRINIGEN III OXIDASE"/>
    <property type="match status" value="1"/>
</dbReference>
<dbReference type="PANTHER" id="PTHR13932:SF6">
    <property type="entry name" value="OXYGEN-INDEPENDENT COPROPORPHYRINOGEN III OXIDASE"/>
    <property type="match status" value="1"/>
</dbReference>
<dbReference type="Pfam" id="PF06969">
    <property type="entry name" value="HemN_C"/>
    <property type="match status" value="1"/>
</dbReference>
<dbReference type="Pfam" id="PF04055">
    <property type="entry name" value="Radical_SAM"/>
    <property type="match status" value="1"/>
</dbReference>
<dbReference type="PIRSF" id="PIRSF000167">
    <property type="entry name" value="HemN"/>
    <property type="match status" value="1"/>
</dbReference>
<dbReference type="SFLD" id="SFLDG01065">
    <property type="entry name" value="anaerobic_coproporphyrinogen-I"/>
    <property type="match status" value="1"/>
</dbReference>
<dbReference type="SFLD" id="SFLDG01082">
    <property type="entry name" value="B12-binding_domain_containing"/>
    <property type="match status" value="1"/>
</dbReference>
<dbReference type="SFLD" id="SFLDF00277">
    <property type="entry name" value="oxygen-independent_coproporphy"/>
    <property type="match status" value="1"/>
</dbReference>
<dbReference type="SMART" id="SM00729">
    <property type="entry name" value="Elp3"/>
    <property type="match status" value="1"/>
</dbReference>
<dbReference type="SUPFAM" id="SSF102114">
    <property type="entry name" value="Radical SAM enzymes"/>
    <property type="match status" value="1"/>
</dbReference>
<dbReference type="PROSITE" id="PS51918">
    <property type="entry name" value="RADICAL_SAM"/>
    <property type="match status" value="1"/>
</dbReference>
<gene>
    <name type="primary">hemN</name>
    <name evidence="5" type="ordered locus">STY3877</name>
    <name evidence="4" type="ordered locus">t3617</name>
</gene>
<accession>P0A1E2</accession>
<accession>P37129</accession>
<protein>
    <recommendedName>
        <fullName>Oxygen-independent coproporphyrinogen III oxidase</fullName>
        <shortName>CPO</shortName>
        <ecNumber evidence="1">1.3.98.3</ecNumber>
    </recommendedName>
    <alternativeName>
        <fullName>Coproporphyrinogen III dehydrogenase</fullName>
        <shortName>CPDH</shortName>
    </alternativeName>
</protein>
<evidence type="ECO:0000250" key="1">
    <source>
        <dbReference type="UniProtKB" id="P32131"/>
    </source>
</evidence>
<evidence type="ECO:0000255" key="2">
    <source>
        <dbReference type="PROSITE-ProRule" id="PRU01266"/>
    </source>
</evidence>
<evidence type="ECO:0000305" key="3"/>
<evidence type="ECO:0000312" key="4">
    <source>
        <dbReference type="EMBL" id="AAO71118.1"/>
    </source>
</evidence>
<evidence type="ECO:0000312" key="5">
    <source>
        <dbReference type="EMBL" id="CAD03096.1"/>
    </source>
</evidence>
<organism>
    <name type="scientific">Salmonella typhi</name>
    <dbReference type="NCBI Taxonomy" id="90370"/>
    <lineage>
        <taxon>Bacteria</taxon>
        <taxon>Pseudomonadati</taxon>
        <taxon>Pseudomonadota</taxon>
        <taxon>Gammaproteobacteria</taxon>
        <taxon>Enterobacterales</taxon>
        <taxon>Enterobacteriaceae</taxon>
        <taxon>Salmonella</taxon>
    </lineage>
</organism>
<sequence>MSEQQIDWDLALIQKYNYSGPRYTSYPTALEFSEDFEDAAFLQAVARYPERPLSLYVHIPFCHKLCYFCGCNKIVTRQQHKADQYLDALEQEIRHRAPLFADRHVSQLHWGGGTPTYLNKAQISRLMTLLRENFHFNTDAEISIEVDPREIELDVLDHLRAEGFNRLSMGVQDFNKEVQRLVNREQDEEFIFALLNHARDIGFTSTNIDLIYGLPKQTPESFAFTLKRVTELNPDRLSVFNYAHLPTLFAAQRKIKDADLPSAQQKLDILQETIVSLTQAGYQFIGMDHFARPDDELAVAQREGVLHRNFQGYTTQGDTDLLGMGVSAISMIGDGYMQNQKELKRYYQQVDERGNALWRGITLTRDDCIRRDVIKALICNFRLDFNAVEQQWGLHFAEYFAEDLQLLSPLAKDGLVDISEKGIQVTAKGRLLIRNICMCFDAYLRQKARMQQFSRVI</sequence>
<comment type="function">
    <text evidence="1">Involved in the heme biosynthesis. Catalyzes the anaerobic oxidative decarboxylation of propionate groups of rings A and B of coproporphyrinogen III to yield the vinyl groups in protoporphyrinogen IX.</text>
</comment>
<comment type="catalytic activity">
    <reaction evidence="1">
        <text>coproporphyrinogen III + 2 S-adenosyl-L-methionine = protoporphyrinogen IX + 2 5'-deoxyadenosine + 2 L-methionine + 2 CO2</text>
        <dbReference type="Rhea" id="RHEA:15425"/>
        <dbReference type="ChEBI" id="CHEBI:16526"/>
        <dbReference type="ChEBI" id="CHEBI:17319"/>
        <dbReference type="ChEBI" id="CHEBI:57307"/>
        <dbReference type="ChEBI" id="CHEBI:57309"/>
        <dbReference type="ChEBI" id="CHEBI:57844"/>
        <dbReference type="ChEBI" id="CHEBI:59789"/>
        <dbReference type="EC" id="1.3.98.3"/>
    </reaction>
</comment>
<comment type="cofactor">
    <cofactor evidence="1">
        <name>[4Fe-4S] cluster</name>
        <dbReference type="ChEBI" id="CHEBI:49883"/>
    </cofactor>
    <text evidence="1">Binds 1 [4Fe-4S] cluster. The cluster is coordinated with 3 cysteines and an exchangeable S-adenosyl-L-methionine.</text>
</comment>
<comment type="pathway">
    <text>Porphyrin-containing compound metabolism; protoporphyrin-IX biosynthesis; protoporphyrinogen-IX from coproporphyrinogen-III (AdoMet route): step 1/1.</text>
</comment>
<comment type="subunit">
    <text evidence="1">Monomer.</text>
</comment>
<comment type="subcellular location">
    <subcellularLocation>
        <location evidence="1">Cytoplasm</location>
    </subcellularLocation>
</comment>
<comment type="similarity">
    <text evidence="3">Belongs to the anaerobic coproporphyrinogen-III oxidase family.</text>
</comment>
<keyword id="KW-0004">4Fe-4S</keyword>
<keyword id="KW-0963">Cytoplasm</keyword>
<keyword id="KW-0408">Iron</keyword>
<keyword id="KW-0411">Iron-sulfur</keyword>
<keyword id="KW-0479">Metal-binding</keyword>
<keyword id="KW-0560">Oxidoreductase</keyword>
<keyword id="KW-0627">Porphyrin biosynthesis</keyword>
<keyword id="KW-0949">S-adenosyl-L-methionine</keyword>